<keyword id="KW-0997">Cell inner membrane</keyword>
<keyword id="KW-1003">Cell membrane</keyword>
<keyword id="KW-0472">Membrane</keyword>
<organism>
    <name type="scientific">Shigella flexneri serotype 5b (strain 8401)</name>
    <dbReference type="NCBI Taxonomy" id="373384"/>
    <lineage>
        <taxon>Bacteria</taxon>
        <taxon>Pseudomonadati</taxon>
        <taxon>Pseudomonadota</taxon>
        <taxon>Gammaproteobacteria</taxon>
        <taxon>Enterobacterales</taxon>
        <taxon>Enterobacteriaceae</taxon>
        <taxon>Shigella</taxon>
    </lineage>
</organism>
<proteinExistence type="inferred from homology"/>
<protein>
    <recommendedName>
        <fullName evidence="1">Protein Syd</fullName>
    </recommendedName>
</protein>
<evidence type="ECO:0000255" key="1">
    <source>
        <dbReference type="HAMAP-Rule" id="MF_01104"/>
    </source>
</evidence>
<sequence>MDDLTAQALKDFTARYCDAWHEEHKSWPLSEELYGVPSPCIISTTEDAVYWQPQPFTGEQNVNAVERAFDIVIQSTIHTFYTTQFAGDMHAQFGDIKLTLLQTWSEDDFRRVQENLIGHLVTQKRLKLPPTLFIATLEEELEVISVCNLSGEVCKETLGTRKRTHLASNLAEFLNQLKPLL</sequence>
<reference key="1">
    <citation type="journal article" date="2006" name="BMC Genomics">
        <title>Complete genome sequence of Shigella flexneri 5b and comparison with Shigella flexneri 2a.</title>
        <authorList>
            <person name="Nie H."/>
            <person name="Yang F."/>
            <person name="Zhang X."/>
            <person name="Yang J."/>
            <person name="Chen L."/>
            <person name="Wang J."/>
            <person name="Xiong Z."/>
            <person name="Peng J."/>
            <person name="Sun L."/>
            <person name="Dong J."/>
            <person name="Xue Y."/>
            <person name="Xu X."/>
            <person name="Chen S."/>
            <person name="Yao Z."/>
            <person name="Shen Y."/>
            <person name="Jin Q."/>
        </authorList>
    </citation>
    <scope>NUCLEOTIDE SEQUENCE [LARGE SCALE GENOMIC DNA]</scope>
    <source>
        <strain>8401</strain>
    </source>
</reference>
<dbReference type="EMBL" id="CP000266">
    <property type="protein sequence ID" value="ABF04756.1"/>
    <property type="molecule type" value="Genomic_DNA"/>
</dbReference>
<dbReference type="RefSeq" id="WP_000342438.1">
    <property type="nucleotide sequence ID" value="NC_008258.1"/>
</dbReference>
<dbReference type="SMR" id="Q0T1Q9"/>
<dbReference type="KEGG" id="sfv:SFV_2664"/>
<dbReference type="HOGENOM" id="CLU_121866_0_0_6"/>
<dbReference type="Proteomes" id="UP000000659">
    <property type="component" value="Chromosome"/>
</dbReference>
<dbReference type="GO" id="GO:0009898">
    <property type="term" value="C:cytoplasmic side of plasma membrane"/>
    <property type="evidence" value="ECO:0007669"/>
    <property type="project" value="InterPro"/>
</dbReference>
<dbReference type="CDD" id="cd16323">
    <property type="entry name" value="Syd"/>
    <property type="match status" value="1"/>
</dbReference>
<dbReference type="FunFam" id="3.40.1580.20:FF:000001">
    <property type="entry name" value="Protein Syd"/>
    <property type="match status" value="1"/>
</dbReference>
<dbReference type="Gene3D" id="3.40.1580.20">
    <property type="entry name" value="Syd protein"/>
    <property type="match status" value="1"/>
</dbReference>
<dbReference type="HAMAP" id="MF_01104">
    <property type="entry name" value="Syd"/>
    <property type="match status" value="1"/>
</dbReference>
<dbReference type="InterPro" id="IPR009948">
    <property type="entry name" value="Syd"/>
</dbReference>
<dbReference type="InterPro" id="IPR038228">
    <property type="entry name" value="Syd_sf"/>
</dbReference>
<dbReference type="NCBIfam" id="NF003439">
    <property type="entry name" value="PRK04968.1"/>
    <property type="match status" value="1"/>
</dbReference>
<dbReference type="Pfam" id="PF07348">
    <property type="entry name" value="Syd"/>
    <property type="match status" value="1"/>
</dbReference>
<comment type="function">
    <text evidence="1">Interacts with the SecY protein in vivo. May bind preferentially to an uncomplexed state of SecY, thus functioning either as a chelating agent for excess SecY in the cell or as a regulatory factor that negatively controls the translocase function.</text>
</comment>
<comment type="subcellular location">
    <subcellularLocation>
        <location evidence="1">Cell inner membrane</location>
        <topology evidence="1">Peripheral membrane protein</topology>
        <orientation evidence="1">Cytoplasmic side</orientation>
    </subcellularLocation>
    <text evidence="1">Loosely associated with the cytoplasmic side of the inner membrane, probably via SecY.</text>
</comment>
<comment type="similarity">
    <text evidence="1">Belongs to the Syd family.</text>
</comment>
<name>SYDP_SHIF8</name>
<gene>
    <name evidence="1" type="primary">syd</name>
    <name type="ordered locus">SFV_2664</name>
</gene>
<accession>Q0T1Q9</accession>
<feature type="chain" id="PRO_0000298267" description="Protein Syd">
    <location>
        <begin position="1"/>
        <end position="181"/>
    </location>
</feature>